<protein>
    <recommendedName>
        <fullName evidence="1">Large ribosomal subunit protein uL30</fullName>
    </recommendedName>
    <alternativeName>
        <fullName evidence="2">50S ribosomal protein L30</fullName>
    </alternativeName>
</protein>
<evidence type="ECO:0000255" key="1">
    <source>
        <dbReference type="HAMAP-Rule" id="MF_01371"/>
    </source>
</evidence>
<evidence type="ECO:0000305" key="2"/>
<accession>A0LIK8</accession>
<reference key="1">
    <citation type="submission" date="2006-10" db="EMBL/GenBank/DDBJ databases">
        <title>Complete sequence of Syntrophobacter fumaroxidans MPOB.</title>
        <authorList>
            <consortium name="US DOE Joint Genome Institute"/>
            <person name="Copeland A."/>
            <person name="Lucas S."/>
            <person name="Lapidus A."/>
            <person name="Barry K."/>
            <person name="Detter J.C."/>
            <person name="Glavina del Rio T."/>
            <person name="Hammon N."/>
            <person name="Israni S."/>
            <person name="Pitluck S."/>
            <person name="Goltsman E.G."/>
            <person name="Martinez M."/>
            <person name="Schmutz J."/>
            <person name="Larimer F."/>
            <person name="Land M."/>
            <person name="Hauser L."/>
            <person name="Kyrpides N."/>
            <person name="Kim E."/>
            <person name="Boone D.R."/>
            <person name="Brockman F."/>
            <person name="Culley D."/>
            <person name="Ferry J."/>
            <person name="Gunsalus R."/>
            <person name="McInerney M.J."/>
            <person name="Morrison M."/>
            <person name="Plugge C."/>
            <person name="Rohlin L."/>
            <person name="Scholten J."/>
            <person name="Sieber J."/>
            <person name="Stams A.J.M."/>
            <person name="Worm P."/>
            <person name="Henstra A.M."/>
            <person name="Richardson P."/>
        </authorList>
    </citation>
    <scope>NUCLEOTIDE SEQUENCE [LARGE SCALE GENOMIC DNA]</scope>
    <source>
        <strain>DSM 10017 / MPOB</strain>
    </source>
</reference>
<comment type="subunit">
    <text evidence="1">Part of the 50S ribosomal subunit.</text>
</comment>
<comment type="similarity">
    <text evidence="1">Belongs to the universal ribosomal protein uL30 family.</text>
</comment>
<name>RL30_SYNFM</name>
<proteinExistence type="inferred from homology"/>
<organism>
    <name type="scientific">Syntrophobacter fumaroxidans (strain DSM 10017 / MPOB)</name>
    <dbReference type="NCBI Taxonomy" id="335543"/>
    <lineage>
        <taxon>Bacteria</taxon>
        <taxon>Pseudomonadati</taxon>
        <taxon>Thermodesulfobacteriota</taxon>
        <taxon>Syntrophobacteria</taxon>
        <taxon>Syntrophobacterales</taxon>
        <taxon>Syntrophobacteraceae</taxon>
        <taxon>Syntrophobacter</taxon>
    </lineage>
</organism>
<sequence length="60" mass="6604">MAKSIQVKLVRSPIGRPEKHRKVLQALGLTRLNKTVNLHATPAVAGAVKKVIHMVEVKEL</sequence>
<keyword id="KW-1185">Reference proteome</keyword>
<keyword id="KW-0687">Ribonucleoprotein</keyword>
<keyword id="KW-0689">Ribosomal protein</keyword>
<dbReference type="EMBL" id="CP000478">
    <property type="protein sequence ID" value="ABK17260.1"/>
    <property type="molecule type" value="Genomic_DNA"/>
</dbReference>
<dbReference type="RefSeq" id="WP_011698430.1">
    <property type="nucleotide sequence ID" value="NC_008554.1"/>
</dbReference>
<dbReference type="SMR" id="A0LIK8"/>
<dbReference type="FunCoup" id="A0LIK8">
    <property type="interactions" value="411"/>
</dbReference>
<dbReference type="STRING" id="335543.Sfum_1573"/>
<dbReference type="KEGG" id="sfu:Sfum_1573"/>
<dbReference type="eggNOG" id="COG1841">
    <property type="taxonomic scope" value="Bacteria"/>
</dbReference>
<dbReference type="HOGENOM" id="CLU_131047_1_3_7"/>
<dbReference type="InParanoid" id="A0LIK8"/>
<dbReference type="OrthoDB" id="9812790at2"/>
<dbReference type="Proteomes" id="UP000001784">
    <property type="component" value="Chromosome"/>
</dbReference>
<dbReference type="GO" id="GO:0022625">
    <property type="term" value="C:cytosolic large ribosomal subunit"/>
    <property type="evidence" value="ECO:0007669"/>
    <property type="project" value="TreeGrafter"/>
</dbReference>
<dbReference type="GO" id="GO:0003735">
    <property type="term" value="F:structural constituent of ribosome"/>
    <property type="evidence" value="ECO:0007669"/>
    <property type="project" value="InterPro"/>
</dbReference>
<dbReference type="GO" id="GO:0006412">
    <property type="term" value="P:translation"/>
    <property type="evidence" value="ECO:0007669"/>
    <property type="project" value="InterPro"/>
</dbReference>
<dbReference type="CDD" id="cd01658">
    <property type="entry name" value="Ribosomal_L30"/>
    <property type="match status" value="1"/>
</dbReference>
<dbReference type="Gene3D" id="3.30.1390.20">
    <property type="entry name" value="Ribosomal protein L30, ferredoxin-like fold domain"/>
    <property type="match status" value="1"/>
</dbReference>
<dbReference type="HAMAP" id="MF_01371_B">
    <property type="entry name" value="Ribosomal_uL30_B"/>
    <property type="match status" value="1"/>
</dbReference>
<dbReference type="InterPro" id="IPR036919">
    <property type="entry name" value="Ribo_uL30_ferredoxin-like_sf"/>
</dbReference>
<dbReference type="InterPro" id="IPR005996">
    <property type="entry name" value="Ribosomal_uL30_bac-type"/>
</dbReference>
<dbReference type="InterPro" id="IPR016082">
    <property type="entry name" value="Ribosomal_uL30_ferredoxin-like"/>
</dbReference>
<dbReference type="NCBIfam" id="TIGR01308">
    <property type="entry name" value="rpmD_bact"/>
    <property type="match status" value="1"/>
</dbReference>
<dbReference type="PANTHER" id="PTHR15892:SF2">
    <property type="entry name" value="LARGE RIBOSOMAL SUBUNIT PROTEIN UL30M"/>
    <property type="match status" value="1"/>
</dbReference>
<dbReference type="PANTHER" id="PTHR15892">
    <property type="entry name" value="MITOCHONDRIAL RIBOSOMAL PROTEIN L30"/>
    <property type="match status" value="1"/>
</dbReference>
<dbReference type="Pfam" id="PF00327">
    <property type="entry name" value="Ribosomal_L30"/>
    <property type="match status" value="1"/>
</dbReference>
<dbReference type="PIRSF" id="PIRSF002211">
    <property type="entry name" value="Ribosomal_L30_bac-type"/>
    <property type="match status" value="1"/>
</dbReference>
<dbReference type="SUPFAM" id="SSF55129">
    <property type="entry name" value="Ribosomal protein L30p/L7e"/>
    <property type="match status" value="1"/>
</dbReference>
<feature type="chain" id="PRO_1000056123" description="Large ribosomal subunit protein uL30">
    <location>
        <begin position="1"/>
        <end position="60"/>
    </location>
</feature>
<gene>
    <name evidence="1" type="primary">rpmD</name>
    <name type="ordered locus">Sfum_1573</name>
</gene>